<proteinExistence type="predicted"/>
<gene>
    <name type="ordered locus">MJ0418</name>
</gene>
<keyword id="KW-0472">Membrane</keyword>
<keyword id="KW-1185">Reference proteome</keyword>
<keyword id="KW-0812">Transmembrane</keyword>
<keyword id="KW-1133">Transmembrane helix</keyword>
<dbReference type="EMBL" id="L77117">
    <property type="protein sequence ID" value="AAB98416.1"/>
    <property type="molecule type" value="Genomic_DNA"/>
</dbReference>
<dbReference type="PIR" id="B64352">
    <property type="entry name" value="B64352"/>
</dbReference>
<dbReference type="SMR" id="Q57861"/>
<dbReference type="STRING" id="243232.MJ_0418"/>
<dbReference type="PaxDb" id="243232-MJ_0418"/>
<dbReference type="EnsemblBacteria" id="AAB98416">
    <property type="protein sequence ID" value="AAB98416"/>
    <property type="gene ID" value="MJ_0418"/>
</dbReference>
<dbReference type="KEGG" id="mja:MJ_0418"/>
<dbReference type="eggNOG" id="arCOG03414">
    <property type="taxonomic scope" value="Archaea"/>
</dbReference>
<dbReference type="HOGENOM" id="CLU_1105215_0_0_2"/>
<dbReference type="InParanoid" id="Q57861"/>
<dbReference type="PhylomeDB" id="Q57861"/>
<dbReference type="Proteomes" id="UP000000805">
    <property type="component" value="Chromosome"/>
</dbReference>
<dbReference type="GO" id="GO:0016020">
    <property type="term" value="C:membrane"/>
    <property type="evidence" value="ECO:0007669"/>
    <property type="project" value="UniProtKB-SubCell"/>
</dbReference>
<dbReference type="InterPro" id="IPR021586">
    <property type="entry name" value="Tscrpt_reg_TrmB_C"/>
</dbReference>
<dbReference type="Pfam" id="PF11495">
    <property type="entry name" value="Regulator_TrmB"/>
    <property type="match status" value="1"/>
</dbReference>
<dbReference type="SUPFAM" id="SSF159071">
    <property type="entry name" value="TrmB C-terminal domain-like"/>
    <property type="match status" value="1"/>
</dbReference>
<accession>Q57861</accession>
<comment type="subcellular location">
    <subcellularLocation>
        <location evidence="2">Membrane</location>
        <topology evidence="2">Single-pass membrane protein</topology>
    </subcellularLocation>
</comment>
<sequence length="257" mass="28765">MIIMKKIGILEIVVILSILITSVSLAYKFYSNNGNDYEFDGNQMYKCAWVCEKILNKNFPLNATIIGKWTLSKKPFNGEVKIYDAKGGTLYAIYNGTPITIGGELAYQEDIAAKKIILHPIGKSIIFYELNPIEGKSFRDIANEIENTTKNFNGLNIVDVIVEGSMGVDSKTYTPVERQKIMNNLDVDIKKGLGLYFVDYGIIINGKIHLNTLKNLDNYINSSNISTSKLTIYVVVNNSIDEIPNKIKENYAIITLG</sequence>
<name>Y418_METJA</name>
<evidence type="ECO:0000255" key="1"/>
<evidence type="ECO:0000305" key="2"/>
<organism>
    <name type="scientific">Methanocaldococcus jannaschii (strain ATCC 43067 / DSM 2661 / JAL-1 / JCM 10045 / NBRC 100440)</name>
    <name type="common">Methanococcus jannaschii</name>
    <dbReference type="NCBI Taxonomy" id="243232"/>
    <lineage>
        <taxon>Archaea</taxon>
        <taxon>Methanobacteriati</taxon>
        <taxon>Methanobacteriota</taxon>
        <taxon>Methanomada group</taxon>
        <taxon>Methanococci</taxon>
        <taxon>Methanococcales</taxon>
        <taxon>Methanocaldococcaceae</taxon>
        <taxon>Methanocaldococcus</taxon>
    </lineage>
</organism>
<feature type="chain" id="PRO_0000106864" description="Uncharacterized protein MJ0418">
    <location>
        <begin position="1"/>
        <end position="257"/>
    </location>
</feature>
<feature type="transmembrane region" description="Helical" evidence="1">
    <location>
        <begin position="7"/>
        <end position="27"/>
    </location>
</feature>
<reference key="1">
    <citation type="journal article" date="1996" name="Science">
        <title>Complete genome sequence of the methanogenic archaeon, Methanococcus jannaschii.</title>
        <authorList>
            <person name="Bult C.J."/>
            <person name="White O."/>
            <person name="Olsen G.J."/>
            <person name="Zhou L."/>
            <person name="Fleischmann R.D."/>
            <person name="Sutton G.G."/>
            <person name="Blake J.A."/>
            <person name="FitzGerald L.M."/>
            <person name="Clayton R.A."/>
            <person name="Gocayne J.D."/>
            <person name="Kerlavage A.R."/>
            <person name="Dougherty B.A."/>
            <person name="Tomb J.-F."/>
            <person name="Adams M.D."/>
            <person name="Reich C.I."/>
            <person name="Overbeek R."/>
            <person name="Kirkness E.F."/>
            <person name="Weinstock K.G."/>
            <person name="Merrick J.M."/>
            <person name="Glodek A."/>
            <person name="Scott J.L."/>
            <person name="Geoghagen N.S.M."/>
            <person name="Weidman J.F."/>
            <person name="Fuhrmann J.L."/>
            <person name="Nguyen D."/>
            <person name="Utterback T.R."/>
            <person name="Kelley J.M."/>
            <person name="Peterson J.D."/>
            <person name="Sadow P.W."/>
            <person name="Hanna M.C."/>
            <person name="Cotton M.D."/>
            <person name="Roberts K.M."/>
            <person name="Hurst M.A."/>
            <person name="Kaine B.P."/>
            <person name="Borodovsky M."/>
            <person name="Klenk H.-P."/>
            <person name="Fraser C.M."/>
            <person name="Smith H.O."/>
            <person name="Woese C.R."/>
            <person name="Venter J.C."/>
        </authorList>
    </citation>
    <scope>NUCLEOTIDE SEQUENCE [LARGE SCALE GENOMIC DNA]</scope>
    <source>
        <strain>ATCC 43067 / DSM 2661 / JAL-1 / JCM 10045 / NBRC 100440</strain>
    </source>
</reference>
<protein>
    <recommendedName>
        <fullName>Uncharacterized protein MJ0418</fullName>
    </recommendedName>
</protein>